<evidence type="ECO:0000255" key="1">
    <source>
        <dbReference type="HAMAP-Rule" id="MF_01575"/>
    </source>
</evidence>
<proteinExistence type="inferred from homology"/>
<dbReference type="EMBL" id="CP000259">
    <property type="protein sequence ID" value="ABF32536.1"/>
    <property type="molecule type" value="Genomic_DNA"/>
</dbReference>
<dbReference type="RefSeq" id="WP_002988930.1">
    <property type="nucleotide sequence ID" value="NC_008021.1"/>
</dbReference>
<dbReference type="SMR" id="Q1JKN3"/>
<dbReference type="KEGG" id="spk:MGAS9429_Spy1349"/>
<dbReference type="HOGENOM" id="CLU_105319_0_0_9"/>
<dbReference type="Proteomes" id="UP000002433">
    <property type="component" value="Chromosome"/>
</dbReference>
<dbReference type="Gene3D" id="3.40.50.450">
    <property type="match status" value="1"/>
</dbReference>
<dbReference type="HAMAP" id="MF_01575">
    <property type="entry name" value="UPF0398"/>
    <property type="match status" value="1"/>
</dbReference>
<dbReference type="InterPro" id="IPR010697">
    <property type="entry name" value="YspA"/>
</dbReference>
<dbReference type="NCBIfam" id="NF010181">
    <property type="entry name" value="PRK13660.1"/>
    <property type="match status" value="1"/>
</dbReference>
<dbReference type="PANTHER" id="PTHR38440:SF1">
    <property type="entry name" value="UPF0398 PROTEIN SPR0331"/>
    <property type="match status" value="1"/>
</dbReference>
<dbReference type="PANTHER" id="PTHR38440">
    <property type="entry name" value="UPF0398 PROTEIN YPSA"/>
    <property type="match status" value="1"/>
</dbReference>
<dbReference type="Pfam" id="PF06908">
    <property type="entry name" value="YpsA"/>
    <property type="match status" value="1"/>
</dbReference>
<dbReference type="PIRSF" id="PIRSF021290">
    <property type="entry name" value="DUF1273"/>
    <property type="match status" value="1"/>
</dbReference>
<dbReference type="SUPFAM" id="SSF102405">
    <property type="entry name" value="MCP/YpsA-like"/>
    <property type="match status" value="1"/>
</dbReference>
<protein>
    <recommendedName>
        <fullName evidence="1">UPF0398 protein MGAS9429_Spy1349</fullName>
    </recommendedName>
</protein>
<accession>Q1JKN3</accession>
<comment type="similarity">
    <text evidence="1">Belongs to the UPF0398 family.</text>
</comment>
<reference key="1">
    <citation type="journal article" date="2006" name="Proc. Natl. Acad. Sci. U.S.A.">
        <title>Molecular genetic anatomy of inter- and intraserotype variation in the human bacterial pathogen group A Streptococcus.</title>
        <authorList>
            <person name="Beres S.B."/>
            <person name="Richter E.W."/>
            <person name="Nagiec M.J."/>
            <person name="Sumby P."/>
            <person name="Porcella S.F."/>
            <person name="DeLeo F.R."/>
            <person name="Musser J.M."/>
        </authorList>
    </citation>
    <scope>NUCLEOTIDE SEQUENCE [LARGE SCALE GENOMIC DNA]</scope>
    <source>
        <strain>MGAS9429</strain>
    </source>
</reference>
<organism>
    <name type="scientific">Streptococcus pyogenes serotype M12 (strain MGAS9429)</name>
    <dbReference type="NCBI Taxonomy" id="370551"/>
    <lineage>
        <taxon>Bacteria</taxon>
        <taxon>Bacillati</taxon>
        <taxon>Bacillota</taxon>
        <taxon>Bacilli</taxon>
        <taxon>Lactobacillales</taxon>
        <taxon>Streptococcaceae</taxon>
        <taxon>Streptococcus</taxon>
    </lineage>
</organism>
<feature type="chain" id="PRO_0000267189" description="UPF0398 protein MGAS9429_Spy1349">
    <location>
        <begin position="1"/>
        <end position="171"/>
    </location>
</feature>
<name>Y1349_STRPC</name>
<sequence>MTAILITGYRSFEIGIFDHKDPRVSIIKQAIRKDLIGYLENGVDWFIFTGNLGFEQWALEVANELKEEYPLQIATIFLFETHGDRWNEKNQKVLSQFRAVDFVKYYFPNYEQPTQFSQYYQFLLEKTEGAYVFYDTENETNLKYFLKKAKDMPHYQLLLLTFDRLNDMSQS</sequence>
<gene>
    <name type="ordered locus">MGAS9429_Spy1349</name>
</gene>